<sequence>MAGNSIGQLFRVTTCGESHGVGLMAIVDGVPPGLALTEEDLQKDLDRRKPGTSKFATQRKEPDQVEIISGVFEGKTTGTPIGLLIRNTDQKSKDYGNIAQTFRPGHADYTYTQKYGFRDYRGGGRSSARETAMRVAAGAIAKKYLAEKFGVLIRGHVTQIGNEVAEKLDWNEVPNNPFFCGDVDAVPRFEALVTSLREQGTSCGAKLEILAEKVPVGWGEPVFDRLDADIAHAMMSINAVKGVEIGDGFAVAGQFGHETRDELTSHGFLANHAGGILGGISSGQTIRVAIALKPTASITTPGKTINLNREDTDVLTKGRHDPCVGVRATPIAEAMLAIVLMDHFLRHRAQNADVVPPFAPIEP</sequence>
<comment type="function">
    <text evidence="1">Catalyzes the anti-1,4-elimination of the C-3 phosphate and the C-6 proR hydrogen from 5-enolpyruvylshikimate-3-phosphate (EPSP) to yield chorismate, which is the branch point compound that serves as the starting substrate for the three terminal pathways of aromatic amino acid biosynthesis. This reaction introduces a second double bond into the aromatic ring system.</text>
</comment>
<comment type="catalytic activity">
    <reaction evidence="1">
        <text>5-O-(1-carboxyvinyl)-3-phosphoshikimate = chorismate + phosphate</text>
        <dbReference type="Rhea" id="RHEA:21020"/>
        <dbReference type="ChEBI" id="CHEBI:29748"/>
        <dbReference type="ChEBI" id="CHEBI:43474"/>
        <dbReference type="ChEBI" id="CHEBI:57701"/>
        <dbReference type="EC" id="4.2.3.5"/>
    </reaction>
</comment>
<comment type="cofactor">
    <cofactor evidence="1">
        <name>FMNH2</name>
        <dbReference type="ChEBI" id="CHEBI:57618"/>
    </cofactor>
    <text evidence="1">Reduced FMN (FMNH(2)).</text>
</comment>
<comment type="pathway">
    <text evidence="1">Metabolic intermediate biosynthesis; chorismate biosynthesis; chorismate from D-erythrose 4-phosphate and phosphoenolpyruvate: step 7/7.</text>
</comment>
<comment type="subunit">
    <text evidence="1">Homotetramer.</text>
</comment>
<comment type="similarity">
    <text evidence="1">Belongs to the chorismate synthase family.</text>
</comment>
<name>AROC_ACIB5</name>
<keyword id="KW-0028">Amino-acid biosynthesis</keyword>
<keyword id="KW-0057">Aromatic amino acid biosynthesis</keyword>
<keyword id="KW-0274">FAD</keyword>
<keyword id="KW-0285">Flavoprotein</keyword>
<keyword id="KW-0288">FMN</keyword>
<keyword id="KW-0456">Lyase</keyword>
<keyword id="KW-0521">NADP</keyword>
<organism>
    <name type="scientific">Acinetobacter baumannii (strain AB0057)</name>
    <dbReference type="NCBI Taxonomy" id="480119"/>
    <lineage>
        <taxon>Bacteria</taxon>
        <taxon>Pseudomonadati</taxon>
        <taxon>Pseudomonadota</taxon>
        <taxon>Gammaproteobacteria</taxon>
        <taxon>Moraxellales</taxon>
        <taxon>Moraxellaceae</taxon>
        <taxon>Acinetobacter</taxon>
        <taxon>Acinetobacter calcoaceticus/baumannii complex</taxon>
    </lineage>
</organism>
<proteinExistence type="inferred from homology"/>
<accession>B7I5W6</accession>
<protein>
    <recommendedName>
        <fullName evidence="1">Chorismate synthase</fullName>
        <shortName evidence="1">CS</shortName>
        <ecNumber evidence="1">4.2.3.5</ecNumber>
    </recommendedName>
    <alternativeName>
        <fullName evidence="1">5-enolpyruvylshikimate-3-phosphate phospholyase</fullName>
    </alternativeName>
</protein>
<gene>
    <name evidence="1" type="primary">aroC</name>
    <name type="ordered locus">AB57_1923</name>
</gene>
<evidence type="ECO:0000255" key="1">
    <source>
        <dbReference type="HAMAP-Rule" id="MF_00300"/>
    </source>
</evidence>
<reference key="1">
    <citation type="journal article" date="2008" name="J. Bacteriol.">
        <title>Comparative genome sequence analysis of multidrug-resistant Acinetobacter baumannii.</title>
        <authorList>
            <person name="Adams M.D."/>
            <person name="Goglin K."/>
            <person name="Molyneaux N."/>
            <person name="Hujer K.M."/>
            <person name="Lavender H."/>
            <person name="Jamison J.J."/>
            <person name="MacDonald I.J."/>
            <person name="Martin K.M."/>
            <person name="Russo T."/>
            <person name="Campagnari A.A."/>
            <person name="Hujer A.M."/>
            <person name="Bonomo R.A."/>
            <person name="Gill S.R."/>
        </authorList>
    </citation>
    <scope>NUCLEOTIDE SEQUENCE [LARGE SCALE GENOMIC DNA]</scope>
    <source>
        <strain>AB0057</strain>
    </source>
</reference>
<feature type="chain" id="PRO_1000119483" description="Chorismate synthase">
    <location>
        <begin position="1"/>
        <end position="363"/>
    </location>
</feature>
<feature type="binding site" evidence="1">
    <location>
        <position position="48"/>
    </location>
    <ligand>
        <name>NADP(+)</name>
        <dbReference type="ChEBI" id="CHEBI:58349"/>
    </ligand>
</feature>
<feature type="binding site" evidence="1">
    <location>
        <begin position="125"/>
        <end position="127"/>
    </location>
    <ligand>
        <name>FMN</name>
        <dbReference type="ChEBI" id="CHEBI:58210"/>
    </ligand>
</feature>
<feature type="binding site" evidence="1">
    <location>
        <begin position="238"/>
        <end position="239"/>
    </location>
    <ligand>
        <name>FMN</name>
        <dbReference type="ChEBI" id="CHEBI:58210"/>
    </ligand>
</feature>
<feature type="binding site" evidence="1">
    <location>
        <position position="278"/>
    </location>
    <ligand>
        <name>FMN</name>
        <dbReference type="ChEBI" id="CHEBI:58210"/>
    </ligand>
</feature>
<feature type="binding site" evidence="1">
    <location>
        <begin position="293"/>
        <end position="297"/>
    </location>
    <ligand>
        <name>FMN</name>
        <dbReference type="ChEBI" id="CHEBI:58210"/>
    </ligand>
</feature>
<feature type="binding site" evidence="1">
    <location>
        <position position="319"/>
    </location>
    <ligand>
        <name>FMN</name>
        <dbReference type="ChEBI" id="CHEBI:58210"/>
    </ligand>
</feature>
<dbReference type="EC" id="4.2.3.5" evidence="1"/>
<dbReference type="EMBL" id="CP001182">
    <property type="protein sequence ID" value="ACJ41298.1"/>
    <property type="molecule type" value="Genomic_DNA"/>
</dbReference>
<dbReference type="RefSeq" id="WP_000918444.1">
    <property type="nucleotide sequence ID" value="NC_011586.2"/>
</dbReference>
<dbReference type="SMR" id="B7I5W6"/>
<dbReference type="GeneID" id="92893903"/>
<dbReference type="KEGG" id="abn:AB57_1923"/>
<dbReference type="HOGENOM" id="CLU_034547_0_2_6"/>
<dbReference type="UniPathway" id="UPA00053">
    <property type="reaction ID" value="UER00090"/>
</dbReference>
<dbReference type="Proteomes" id="UP000007094">
    <property type="component" value="Chromosome"/>
</dbReference>
<dbReference type="GO" id="GO:0005829">
    <property type="term" value="C:cytosol"/>
    <property type="evidence" value="ECO:0007669"/>
    <property type="project" value="TreeGrafter"/>
</dbReference>
<dbReference type="GO" id="GO:0004107">
    <property type="term" value="F:chorismate synthase activity"/>
    <property type="evidence" value="ECO:0007669"/>
    <property type="project" value="UniProtKB-UniRule"/>
</dbReference>
<dbReference type="GO" id="GO:0010181">
    <property type="term" value="F:FMN binding"/>
    <property type="evidence" value="ECO:0007669"/>
    <property type="project" value="TreeGrafter"/>
</dbReference>
<dbReference type="GO" id="GO:0008652">
    <property type="term" value="P:amino acid biosynthetic process"/>
    <property type="evidence" value="ECO:0007669"/>
    <property type="project" value="UniProtKB-KW"/>
</dbReference>
<dbReference type="GO" id="GO:0009073">
    <property type="term" value="P:aromatic amino acid family biosynthetic process"/>
    <property type="evidence" value="ECO:0007669"/>
    <property type="project" value="UniProtKB-KW"/>
</dbReference>
<dbReference type="GO" id="GO:0009423">
    <property type="term" value="P:chorismate biosynthetic process"/>
    <property type="evidence" value="ECO:0007669"/>
    <property type="project" value="UniProtKB-UniRule"/>
</dbReference>
<dbReference type="CDD" id="cd07304">
    <property type="entry name" value="Chorismate_synthase"/>
    <property type="match status" value="1"/>
</dbReference>
<dbReference type="FunFam" id="3.60.150.10:FF:000001">
    <property type="entry name" value="Chorismate synthase"/>
    <property type="match status" value="1"/>
</dbReference>
<dbReference type="Gene3D" id="3.60.150.10">
    <property type="entry name" value="Chorismate synthase AroC"/>
    <property type="match status" value="1"/>
</dbReference>
<dbReference type="HAMAP" id="MF_00300">
    <property type="entry name" value="Chorismate_synth"/>
    <property type="match status" value="1"/>
</dbReference>
<dbReference type="InterPro" id="IPR000453">
    <property type="entry name" value="Chorismate_synth"/>
</dbReference>
<dbReference type="InterPro" id="IPR035904">
    <property type="entry name" value="Chorismate_synth_AroC_sf"/>
</dbReference>
<dbReference type="InterPro" id="IPR020541">
    <property type="entry name" value="Chorismate_synthase_CS"/>
</dbReference>
<dbReference type="NCBIfam" id="TIGR00033">
    <property type="entry name" value="aroC"/>
    <property type="match status" value="1"/>
</dbReference>
<dbReference type="NCBIfam" id="NF003793">
    <property type="entry name" value="PRK05382.1"/>
    <property type="match status" value="1"/>
</dbReference>
<dbReference type="PANTHER" id="PTHR21085">
    <property type="entry name" value="CHORISMATE SYNTHASE"/>
    <property type="match status" value="1"/>
</dbReference>
<dbReference type="PANTHER" id="PTHR21085:SF0">
    <property type="entry name" value="CHORISMATE SYNTHASE"/>
    <property type="match status" value="1"/>
</dbReference>
<dbReference type="Pfam" id="PF01264">
    <property type="entry name" value="Chorismate_synt"/>
    <property type="match status" value="1"/>
</dbReference>
<dbReference type="PIRSF" id="PIRSF001456">
    <property type="entry name" value="Chorismate_synth"/>
    <property type="match status" value="1"/>
</dbReference>
<dbReference type="SUPFAM" id="SSF103263">
    <property type="entry name" value="Chorismate synthase, AroC"/>
    <property type="match status" value="1"/>
</dbReference>
<dbReference type="PROSITE" id="PS00787">
    <property type="entry name" value="CHORISMATE_SYNTHASE_1"/>
    <property type="match status" value="1"/>
</dbReference>
<dbReference type="PROSITE" id="PS00788">
    <property type="entry name" value="CHORISMATE_SYNTHASE_2"/>
    <property type="match status" value="1"/>
</dbReference>
<dbReference type="PROSITE" id="PS00789">
    <property type="entry name" value="CHORISMATE_SYNTHASE_3"/>
    <property type="match status" value="1"/>
</dbReference>